<reference key="1">
    <citation type="journal article" date="2008" name="PLoS ONE">
        <title>Genome biology of Actinobacillus pleuropneumoniae JL03, an isolate of serotype 3 prevalent in China.</title>
        <authorList>
            <person name="Xu Z."/>
            <person name="Zhou Y."/>
            <person name="Li L."/>
            <person name="Zhou R."/>
            <person name="Xiao S."/>
            <person name="Wan Y."/>
            <person name="Zhang S."/>
            <person name="Wang K."/>
            <person name="Li W."/>
            <person name="Li L."/>
            <person name="Jin H."/>
            <person name="Kang M."/>
            <person name="Dalai B."/>
            <person name="Li T."/>
            <person name="Liu L."/>
            <person name="Cheng Y."/>
            <person name="Zhang L."/>
            <person name="Xu T."/>
            <person name="Zheng H."/>
            <person name="Pu S."/>
            <person name="Wang B."/>
            <person name="Gu W."/>
            <person name="Zhang X.L."/>
            <person name="Zhu G.-F."/>
            <person name="Wang S."/>
            <person name="Zhao G.-P."/>
            <person name="Chen H."/>
        </authorList>
    </citation>
    <scope>NUCLEOTIDE SEQUENCE [LARGE SCALE GENOMIC DNA]</scope>
    <source>
        <strain>JL03</strain>
    </source>
</reference>
<organism>
    <name type="scientific">Actinobacillus pleuropneumoniae serotype 3 (strain JL03)</name>
    <dbReference type="NCBI Taxonomy" id="434271"/>
    <lineage>
        <taxon>Bacteria</taxon>
        <taxon>Pseudomonadati</taxon>
        <taxon>Pseudomonadota</taxon>
        <taxon>Gammaproteobacteria</taxon>
        <taxon>Pasteurellales</taxon>
        <taxon>Pasteurellaceae</taxon>
        <taxon>Actinobacillus</taxon>
    </lineage>
</organism>
<evidence type="ECO:0000255" key="1">
    <source>
        <dbReference type="HAMAP-Rule" id="MF_00133"/>
    </source>
</evidence>
<comment type="function">
    <text evidence="1">The beta subunit is responsible for the synthesis of L-tryptophan from indole and L-serine.</text>
</comment>
<comment type="catalytic activity">
    <reaction evidence="1">
        <text>(1S,2R)-1-C-(indol-3-yl)glycerol 3-phosphate + L-serine = D-glyceraldehyde 3-phosphate + L-tryptophan + H2O</text>
        <dbReference type="Rhea" id="RHEA:10532"/>
        <dbReference type="ChEBI" id="CHEBI:15377"/>
        <dbReference type="ChEBI" id="CHEBI:33384"/>
        <dbReference type="ChEBI" id="CHEBI:57912"/>
        <dbReference type="ChEBI" id="CHEBI:58866"/>
        <dbReference type="ChEBI" id="CHEBI:59776"/>
        <dbReference type="EC" id="4.2.1.20"/>
    </reaction>
</comment>
<comment type="cofactor">
    <cofactor evidence="1">
        <name>pyridoxal 5'-phosphate</name>
        <dbReference type="ChEBI" id="CHEBI:597326"/>
    </cofactor>
</comment>
<comment type="pathway">
    <text evidence="1">Amino-acid biosynthesis; L-tryptophan biosynthesis; L-tryptophan from chorismate: step 5/5.</text>
</comment>
<comment type="subunit">
    <text evidence="1">Tetramer of two alpha and two beta chains.</text>
</comment>
<comment type="similarity">
    <text evidence="1">Belongs to the TrpB family.</text>
</comment>
<proteinExistence type="inferred from homology"/>
<gene>
    <name evidence="1" type="primary">trpB</name>
    <name type="ordered locus">APJL_0496</name>
</gene>
<name>TRPB_ACTPJ</name>
<keyword id="KW-0028">Amino-acid biosynthesis</keyword>
<keyword id="KW-0057">Aromatic amino acid biosynthesis</keyword>
<keyword id="KW-0456">Lyase</keyword>
<keyword id="KW-0663">Pyridoxal phosphate</keyword>
<keyword id="KW-0822">Tryptophan biosynthesis</keyword>
<protein>
    <recommendedName>
        <fullName evidence="1">Tryptophan synthase beta chain</fullName>
        <ecNumber evidence="1">4.2.1.20</ecNumber>
    </recommendedName>
</protein>
<accession>B0BU72</accession>
<sequence length="396" mass="42854">MSDTLLNPYFGEFGGMYVPEILVPVLKQLEETFVAAQNDPLFQAEFTDLLKNYAGRPTALTLCRNLTKGSKTKLYLKREDLLHGGAHKTNQVLGQALLAKRMGKTRIIAETGAGQHGVATALACAMLDLPCVIYMGAKDVERQSPNVFRMRLMGAEVIPVQKGSCSLKDACCEAMRDWAANYETTHYLIGTAAGPHPFPTMVREFQKMIGEETKRQILEKENRLPDAVIAAVGGGSNAIGMFAGFIEEKSVQLIGVEPAGKGIETGEHGAPLKHGTTGIYFGMKSPIMQTKDGQIEESYSISAGLDFPSVGPQHAYLNSIGRAEYVSITNQEALDAFQALAQHEGIIPALESSHALAYALKLIAQNPDKEQLLVVNLSGRGDKDIFTVDKILNGGN</sequence>
<dbReference type="EC" id="4.2.1.20" evidence="1"/>
<dbReference type="EMBL" id="CP000687">
    <property type="protein sequence ID" value="ABY69077.1"/>
    <property type="molecule type" value="Genomic_DNA"/>
</dbReference>
<dbReference type="RefSeq" id="WP_012262827.1">
    <property type="nucleotide sequence ID" value="NC_010278.1"/>
</dbReference>
<dbReference type="SMR" id="B0BU72"/>
<dbReference type="KEGG" id="apj:APJL_0496"/>
<dbReference type="HOGENOM" id="CLU_016734_3_1_6"/>
<dbReference type="UniPathway" id="UPA00035">
    <property type="reaction ID" value="UER00044"/>
</dbReference>
<dbReference type="Proteomes" id="UP000008547">
    <property type="component" value="Chromosome"/>
</dbReference>
<dbReference type="GO" id="GO:0005737">
    <property type="term" value="C:cytoplasm"/>
    <property type="evidence" value="ECO:0007669"/>
    <property type="project" value="TreeGrafter"/>
</dbReference>
<dbReference type="GO" id="GO:0004834">
    <property type="term" value="F:tryptophan synthase activity"/>
    <property type="evidence" value="ECO:0007669"/>
    <property type="project" value="UniProtKB-UniRule"/>
</dbReference>
<dbReference type="CDD" id="cd06446">
    <property type="entry name" value="Trp-synth_B"/>
    <property type="match status" value="1"/>
</dbReference>
<dbReference type="FunFam" id="3.40.50.1100:FF:000001">
    <property type="entry name" value="Tryptophan synthase beta chain"/>
    <property type="match status" value="1"/>
</dbReference>
<dbReference type="FunFam" id="3.40.50.1100:FF:000004">
    <property type="entry name" value="Tryptophan synthase beta chain"/>
    <property type="match status" value="1"/>
</dbReference>
<dbReference type="Gene3D" id="3.40.50.1100">
    <property type="match status" value="2"/>
</dbReference>
<dbReference type="HAMAP" id="MF_00133">
    <property type="entry name" value="Trp_synth_beta"/>
    <property type="match status" value="1"/>
</dbReference>
<dbReference type="InterPro" id="IPR006653">
    <property type="entry name" value="Trp_synth_b_CS"/>
</dbReference>
<dbReference type="InterPro" id="IPR006654">
    <property type="entry name" value="Trp_synth_beta"/>
</dbReference>
<dbReference type="InterPro" id="IPR023026">
    <property type="entry name" value="Trp_synth_beta/beta-like"/>
</dbReference>
<dbReference type="InterPro" id="IPR001926">
    <property type="entry name" value="TrpB-like_PALP"/>
</dbReference>
<dbReference type="InterPro" id="IPR036052">
    <property type="entry name" value="TrpB-like_PALP_sf"/>
</dbReference>
<dbReference type="NCBIfam" id="TIGR00263">
    <property type="entry name" value="trpB"/>
    <property type="match status" value="1"/>
</dbReference>
<dbReference type="PANTHER" id="PTHR48077:SF3">
    <property type="entry name" value="TRYPTOPHAN SYNTHASE"/>
    <property type="match status" value="1"/>
</dbReference>
<dbReference type="PANTHER" id="PTHR48077">
    <property type="entry name" value="TRYPTOPHAN SYNTHASE-RELATED"/>
    <property type="match status" value="1"/>
</dbReference>
<dbReference type="Pfam" id="PF00291">
    <property type="entry name" value="PALP"/>
    <property type="match status" value="1"/>
</dbReference>
<dbReference type="PIRSF" id="PIRSF001413">
    <property type="entry name" value="Trp_syn_beta"/>
    <property type="match status" value="1"/>
</dbReference>
<dbReference type="SUPFAM" id="SSF53686">
    <property type="entry name" value="Tryptophan synthase beta subunit-like PLP-dependent enzymes"/>
    <property type="match status" value="1"/>
</dbReference>
<dbReference type="PROSITE" id="PS00168">
    <property type="entry name" value="TRP_SYNTHASE_BETA"/>
    <property type="match status" value="1"/>
</dbReference>
<feature type="chain" id="PRO_1000095772" description="Tryptophan synthase beta chain">
    <location>
        <begin position="1"/>
        <end position="396"/>
    </location>
</feature>
<feature type="modified residue" description="N6-(pyridoxal phosphate)lysine" evidence="1">
    <location>
        <position position="88"/>
    </location>
</feature>